<feature type="chain" id="PRO_0000226483" description="Small ribosomal subunit protein uS7">
    <location>
        <begin position="1"/>
        <end position="156"/>
    </location>
</feature>
<evidence type="ECO:0000255" key="1">
    <source>
        <dbReference type="HAMAP-Rule" id="MF_00480"/>
    </source>
</evidence>
<evidence type="ECO:0000305" key="2"/>
<protein>
    <recommendedName>
        <fullName evidence="1">Small ribosomal subunit protein uS7</fullName>
    </recommendedName>
    <alternativeName>
        <fullName evidence="2">30S ribosomal protein S7</fullName>
    </alternativeName>
</protein>
<dbReference type="EMBL" id="CP000016">
    <property type="protein sequence ID" value="AAZ41192.1"/>
    <property type="molecule type" value="Genomic_DNA"/>
</dbReference>
<dbReference type="RefSeq" id="WP_011283103.1">
    <property type="nucleotide sequence ID" value="NC_007292.1"/>
</dbReference>
<dbReference type="SMR" id="Q492B0"/>
<dbReference type="STRING" id="291272.BPEN_586"/>
<dbReference type="KEGG" id="bpn:BPEN_586"/>
<dbReference type="eggNOG" id="COG0049">
    <property type="taxonomic scope" value="Bacteria"/>
</dbReference>
<dbReference type="HOGENOM" id="CLU_072226_1_1_6"/>
<dbReference type="OrthoDB" id="9807653at2"/>
<dbReference type="Proteomes" id="UP000007794">
    <property type="component" value="Chromosome"/>
</dbReference>
<dbReference type="GO" id="GO:0015935">
    <property type="term" value="C:small ribosomal subunit"/>
    <property type="evidence" value="ECO:0007669"/>
    <property type="project" value="InterPro"/>
</dbReference>
<dbReference type="GO" id="GO:0019843">
    <property type="term" value="F:rRNA binding"/>
    <property type="evidence" value="ECO:0007669"/>
    <property type="project" value="UniProtKB-UniRule"/>
</dbReference>
<dbReference type="GO" id="GO:0003735">
    <property type="term" value="F:structural constituent of ribosome"/>
    <property type="evidence" value="ECO:0007669"/>
    <property type="project" value="InterPro"/>
</dbReference>
<dbReference type="GO" id="GO:0000049">
    <property type="term" value="F:tRNA binding"/>
    <property type="evidence" value="ECO:0007669"/>
    <property type="project" value="UniProtKB-UniRule"/>
</dbReference>
<dbReference type="GO" id="GO:0006412">
    <property type="term" value="P:translation"/>
    <property type="evidence" value="ECO:0007669"/>
    <property type="project" value="UniProtKB-UniRule"/>
</dbReference>
<dbReference type="CDD" id="cd14869">
    <property type="entry name" value="uS7_Bacteria"/>
    <property type="match status" value="1"/>
</dbReference>
<dbReference type="FunFam" id="1.10.455.10:FF:000001">
    <property type="entry name" value="30S ribosomal protein S7"/>
    <property type="match status" value="1"/>
</dbReference>
<dbReference type="Gene3D" id="1.10.455.10">
    <property type="entry name" value="Ribosomal protein S7 domain"/>
    <property type="match status" value="1"/>
</dbReference>
<dbReference type="HAMAP" id="MF_00480_B">
    <property type="entry name" value="Ribosomal_uS7_B"/>
    <property type="match status" value="1"/>
</dbReference>
<dbReference type="InterPro" id="IPR000235">
    <property type="entry name" value="Ribosomal_uS7"/>
</dbReference>
<dbReference type="InterPro" id="IPR005717">
    <property type="entry name" value="Ribosomal_uS7_bac/org-type"/>
</dbReference>
<dbReference type="InterPro" id="IPR020606">
    <property type="entry name" value="Ribosomal_uS7_CS"/>
</dbReference>
<dbReference type="InterPro" id="IPR023798">
    <property type="entry name" value="Ribosomal_uS7_dom"/>
</dbReference>
<dbReference type="InterPro" id="IPR036823">
    <property type="entry name" value="Ribosomal_uS7_dom_sf"/>
</dbReference>
<dbReference type="NCBIfam" id="TIGR01029">
    <property type="entry name" value="rpsG_bact"/>
    <property type="match status" value="1"/>
</dbReference>
<dbReference type="PANTHER" id="PTHR11205">
    <property type="entry name" value="RIBOSOMAL PROTEIN S7"/>
    <property type="match status" value="1"/>
</dbReference>
<dbReference type="Pfam" id="PF00177">
    <property type="entry name" value="Ribosomal_S7"/>
    <property type="match status" value="1"/>
</dbReference>
<dbReference type="PIRSF" id="PIRSF002122">
    <property type="entry name" value="RPS7p_RPS7a_RPS5e_RPS7o"/>
    <property type="match status" value="1"/>
</dbReference>
<dbReference type="SUPFAM" id="SSF47973">
    <property type="entry name" value="Ribosomal protein S7"/>
    <property type="match status" value="1"/>
</dbReference>
<dbReference type="PROSITE" id="PS00052">
    <property type="entry name" value="RIBOSOMAL_S7"/>
    <property type="match status" value="1"/>
</dbReference>
<proteinExistence type="inferred from homology"/>
<reference key="1">
    <citation type="journal article" date="2005" name="Genome Res.">
        <title>Genome sequence of Blochmannia pennsylvanicus indicates parallel evolutionary trends among bacterial mutualists of insects.</title>
        <authorList>
            <person name="Degnan P.H."/>
            <person name="Lazarus A.B."/>
            <person name="Wernegreen J.J."/>
        </authorList>
    </citation>
    <scope>NUCLEOTIDE SEQUENCE [LARGE SCALE GENOMIC DNA]</scope>
    <source>
        <strain>BPEN</strain>
    </source>
</reference>
<sequence length="156" mass="18028">MPRRRIVTKRNILPDPRFGSDLLAKFINILMLNGKKSTAESIVYSALDSLFRRSNKNCLEAFEIALNNVRPVVEVKSRRVGGSTYQVPVEVRLVRRNTLAMRWIIEAARKRNDKSMELRLASELLDAIEGKGHAVKKREEIHRIAESNKAFAHYRW</sequence>
<accession>Q492B0</accession>
<gene>
    <name evidence="1" type="primary">rpsG</name>
    <name type="ordered locus">BPEN_586</name>
</gene>
<comment type="function">
    <text evidence="1">One of the primary rRNA binding proteins, it binds directly to 16S rRNA where it nucleates assembly of the head domain of the 30S subunit. Is located at the subunit interface close to the decoding center, probably blocks exit of the E-site tRNA.</text>
</comment>
<comment type="subunit">
    <text evidence="1">Part of the 30S ribosomal subunit. Contacts proteins S9 and S11.</text>
</comment>
<comment type="similarity">
    <text evidence="1">Belongs to the universal ribosomal protein uS7 family.</text>
</comment>
<keyword id="KW-1185">Reference proteome</keyword>
<keyword id="KW-0687">Ribonucleoprotein</keyword>
<keyword id="KW-0689">Ribosomal protein</keyword>
<keyword id="KW-0694">RNA-binding</keyword>
<keyword id="KW-0699">rRNA-binding</keyword>
<keyword id="KW-0820">tRNA-binding</keyword>
<name>RS7_BLOPB</name>
<organism>
    <name type="scientific">Blochmanniella pennsylvanica (strain BPEN)</name>
    <dbReference type="NCBI Taxonomy" id="291272"/>
    <lineage>
        <taxon>Bacteria</taxon>
        <taxon>Pseudomonadati</taxon>
        <taxon>Pseudomonadota</taxon>
        <taxon>Gammaproteobacteria</taxon>
        <taxon>Enterobacterales</taxon>
        <taxon>Enterobacteriaceae</taxon>
        <taxon>ant endosymbionts</taxon>
        <taxon>Candidatus Blochmanniella</taxon>
    </lineage>
</organism>